<proteinExistence type="inferred from homology"/>
<dbReference type="EMBL" id="AL646052">
    <property type="protein sequence ID" value="CAD16537.1"/>
    <property type="molecule type" value="Genomic_DNA"/>
</dbReference>
<dbReference type="RefSeq" id="WP_011002736.1">
    <property type="nucleotide sequence ID" value="NC_003295.1"/>
</dbReference>
<dbReference type="SMR" id="Q8XVK0"/>
<dbReference type="STRING" id="267608.RSc2830"/>
<dbReference type="EnsemblBacteria" id="CAD16537">
    <property type="protein sequence ID" value="CAD16537"/>
    <property type="gene ID" value="RSc2830"/>
</dbReference>
<dbReference type="GeneID" id="93851400"/>
<dbReference type="KEGG" id="rso:RSc2830"/>
<dbReference type="eggNOG" id="COG3024">
    <property type="taxonomic scope" value="Bacteria"/>
</dbReference>
<dbReference type="HOGENOM" id="CLU_178280_3_2_4"/>
<dbReference type="Proteomes" id="UP000001436">
    <property type="component" value="Chromosome"/>
</dbReference>
<dbReference type="GO" id="GO:0008657">
    <property type="term" value="F:DNA topoisomerase type II (double strand cut, ATP-hydrolyzing) inhibitor activity"/>
    <property type="evidence" value="ECO:0007669"/>
    <property type="project" value="UniProtKB-UniRule"/>
</dbReference>
<dbReference type="GO" id="GO:0008270">
    <property type="term" value="F:zinc ion binding"/>
    <property type="evidence" value="ECO:0007669"/>
    <property type="project" value="UniProtKB-UniRule"/>
</dbReference>
<dbReference type="GO" id="GO:0006355">
    <property type="term" value="P:regulation of DNA-templated transcription"/>
    <property type="evidence" value="ECO:0007669"/>
    <property type="project" value="InterPro"/>
</dbReference>
<dbReference type="Gene3D" id="3.30.50.10">
    <property type="entry name" value="Erythroid Transcription Factor GATA-1, subunit A"/>
    <property type="match status" value="1"/>
</dbReference>
<dbReference type="HAMAP" id="MF_00649">
    <property type="entry name" value="DNA_gyrase_inhibitor_YacG"/>
    <property type="match status" value="1"/>
</dbReference>
<dbReference type="InterPro" id="IPR005584">
    <property type="entry name" value="DNA_gyrase_inhibitor_YacG"/>
</dbReference>
<dbReference type="InterPro" id="IPR013088">
    <property type="entry name" value="Znf_NHR/GATA"/>
</dbReference>
<dbReference type="NCBIfam" id="NF001638">
    <property type="entry name" value="PRK00418.1"/>
    <property type="match status" value="1"/>
</dbReference>
<dbReference type="PANTHER" id="PTHR36150">
    <property type="entry name" value="DNA GYRASE INHIBITOR YACG"/>
    <property type="match status" value="1"/>
</dbReference>
<dbReference type="PANTHER" id="PTHR36150:SF1">
    <property type="entry name" value="DNA GYRASE INHIBITOR YACG"/>
    <property type="match status" value="1"/>
</dbReference>
<dbReference type="Pfam" id="PF03884">
    <property type="entry name" value="YacG"/>
    <property type="match status" value="1"/>
</dbReference>
<dbReference type="SUPFAM" id="SSF57716">
    <property type="entry name" value="Glucocorticoid receptor-like (DNA-binding domain)"/>
    <property type="match status" value="1"/>
</dbReference>
<feature type="chain" id="PRO_0000211718" description="DNA gyrase inhibitor YacG">
    <location>
        <begin position="1"/>
        <end position="71"/>
    </location>
</feature>
<feature type="region of interest" description="Disordered" evidence="2">
    <location>
        <begin position="48"/>
        <end position="71"/>
    </location>
</feature>
<feature type="compositionally biased region" description="Gly residues" evidence="2">
    <location>
        <begin position="61"/>
        <end position="71"/>
    </location>
</feature>
<feature type="binding site" evidence="1">
    <location>
        <position position="8"/>
    </location>
    <ligand>
        <name>Zn(2+)</name>
        <dbReference type="ChEBI" id="CHEBI:29105"/>
    </ligand>
</feature>
<feature type="binding site" evidence="1">
    <location>
        <position position="11"/>
    </location>
    <ligand>
        <name>Zn(2+)</name>
        <dbReference type="ChEBI" id="CHEBI:29105"/>
    </ligand>
</feature>
<feature type="binding site" evidence="1">
    <location>
        <position position="27"/>
    </location>
    <ligand>
        <name>Zn(2+)</name>
        <dbReference type="ChEBI" id="CHEBI:29105"/>
    </ligand>
</feature>
<feature type="binding site" evidence="1">
    <location>
        <position position="31"/>
    </location>
    <ligand>
        <name>Zn(2+)</name>
        <dbReference type="ChEBI" id="CHEBI:29105"/>
    </ligand>
</feature>
<accession>Q8XVK0</accession>
<protein>
    <recommendedName>
        <fullName evidence="1">DNA gyrase inhibitor YacG</fullName>
    </recommendedName>
</protein>
<comment type="function">
    <text evidence="1">Inhibits all the catalytic activities of DNA gyrase by preventing its interaction with DNA. Acts by binding directly to the C-terminal domain of GyrB, which probably disrupts DNA binding by the gyrase.</text>
</comment>
<comment type="cofactor">
    <cofactor evidence="1">
        <name>Zn(2+)</name>
        <dbReference type="ChEBI" id="CHEBI:29105"/>
    </cofactor>
    <text evidence="1">Binds 1 zinc ion.</text>
</comment>
<comment type="subunit">
    <text evidence="1">Interacts with GyrB.</text>
</comment>
<comment type="similarity">
    <text evidence="1">Belongs to the DNA gyrase inhibitor YacG family.</text>
</comment>
<sequence>MNMKTVKCPTCGKPVPWTPESRYRPFCSERCKQIDLGAWAAEQYTIPVVEDDDLPPDAPGGESGGASGRLN</sequence>
<name>YACG_RALN1</name>
<evidence type="ECO:0000255" key="1">
    <source>
        <dbReference type="HAMAP-Rule" id="MF_00649"/>
    </source>
</evidence>
<evidence type="ECO:0000256" key="2">
    <source>
        <dbReference type="SAM" id="MobiDB-lite"/>
    </source>
</evidence>
<gene>
    <name evidence="1" type="primary">yacG</name>
    <name type="ordered locus">RSc2830</name>
    <name type="ORF">RS00275</name>
</gene>
<reference key="1">
    <citation type="journal article" date="2002" name="Nature">
        <title>Genome sequence of the plant pathogen Ralstonia solanacearum.</title>
        <authorList>
            <person name="Salanoubat M."/>
            <person name="Genin S."/>
            <person name="Artiguenave F."/>
            <person name="Gouzy J."/>
            <person name="Mangenot S."/>
            <person name="Arlat M."/>
            <person name="Billault A."/>
            <person name="Brottier P."/>
            <person name="Camus J.-C."/>
            <person name="Cattolico L."/>
            <person name="Chandler M."/>
            <person name="Choisne N."/>
            <person name="Claudel-Renard C."/>
            <person name="Cunnac S."/>
            <person name="Demange N."/>
            <person name="Gaspin C."/>
            <person name="Lavie M."/>
            <person name="Moisan A."/>
            <person name="Robert C."/>
            <person name="Saurin W."/>
            <person name="Schiex T."/>
            <person name="Siguier P."/>
            <person name="Thebault P."/>
            <person name="Whalen M."/>
            <person name="Wincker P."/>
            <person name="Levy M."/>
            <person name="Weissenbach J."/>
            <person name="Boucher C.A."/>
        </authorList>
    </citation>
    <scope>NUCLEOTIDE SEQUENCE [LARGE SCALE GENOMIC DNA]</scope>
    <source>
        <strain>ATCC BAA-1114 / GMI1000</strain>
    </source>
</reference>
<organism>
    <name type="scientific">Ralstonia nicotianae (strain ATCC BAA-1114 / GMI1000)</name>
    <name type="common">Ralstonia solanacearum</name>
    <dbReference type="NCBI Taxonomy" id="267608"/>
    <lineage>
        <taxon>Bacteria</taxon>
        <taxon>Pseudomonadati</taxon>
        <taxon>Pseudomonadota</taxon>
        <taxon>Betaproteobacteria</taxon>
        <taxon>Burkholderiales</taxon>
        <taxon>Burkholderiaceae</taxon>
        <taxon>Ralstonia</taxon>
        <taxon>Ralstonia solanacearum species complex</taxon>
    </lineage>
</organism>
<keyword id="KW-0479">Metal-binding</keyword>
<keyword id="KW-1185">Reference proteome</keyword>
<keyword id="KW-0862">Zinc</keyword>